<name>LIS1_SCHMA</name>
<accession>C4Q0P6</accession>
<accession>G4VEI0</accession>
<reference key="1">
    <citation type="journal article" date="2009" name="Nature">
        <title>The genome of the blood fluke Schistosoma mansoni.</title>
        <authorList>
            <person name="Berriman M."/>
            <person name="Haas B.J."/>
            <person name="LoVerde P.T."/>
            <person name="Wilson R.A."/>
            <person name="Dillon G.P."/>
            <person name="Cerqueira G.C."/>
            <person name="Mashiyama S.T."/>
            <person name="Al-Lazikani B."/>
            <person name="Andrade L.F."/>
            <person name="Ashton P.D."/>
            <person name="Aslett M.A."/>
            <person name="Bartholomeu D.C."/>
            <person name="Blandin G."/>
            <person name="Caffrey C.R."/>
            <person name="Coghlan A."/>
            <person name="Coulson R."/>
            <person name="Day T.A."/>
            <person name="Delcher A."/>
            <person name="DeMarco R."/>
            <person name="Djikeng A."/>
            <person name="Eyre T."/>
            <person name="Gamble J.A."/>
            <person name="Ghedin E."/>
            <person name="Gu Y."/>
            <person name="Hertz-Fowler C."/>
            <person name="Hirai H."/>
            <person name="Hirai Y."/>
            <person name="Houston R."/>
            <person name="Ivens A."/>
            <person name="Johnston D.A."/>
            <person name="Lacerda D."/>
            <person name="Macedo C.D."/>
            <person name="McVeigh P."/>
            <person name="Ning Z."/>
            <person name="Oliveira G."/>
            <person name="Overington J.P."/>
            <person name="Parkhill J."/>
            <person name="Pertea M."/>
            <person name="Pierce R.J."/>
            <person name="Protasio A.V."/>
            <person name="Quail M.A."/>
            <person name="Rajandream M.A."/>
            <person name="Rogers J."/>
            <person name="Sajid M."/>
            <person name="Salzberg S.L."/>
            <person name="Stanke M."/>
            <person name="Tivey A.R."/>
            <person name="White O."/>
            <person name="Williams D.L."/>
            <person name="Wortman J."/>
            <person name="Wu W."/>
            <person name="Zamanian M."/>
            <person name="Zerlotini A."/>
            <person name="Fraser-Liggett C.M."/>
            <person name="Barrell B.G."/>
            <person name="El-Sayed N.M."/>
        </authorList>
    </citation>
    <scope>NUCLEOTIDE SEQUENCE [LARGE SCALE GENOMIC DNA]</scope>
    <source>
        <strain>Puerto Rican</strain>
    </source>
</reference>
<reference key="2">
    <citation type="journal article" date="2012" name="PLoS Negl. Trop. Dis.">
        <title>A systematically improved high quality genome and transcriptome of the human blood fluke Schistosoma mansoni.</title>
        <authorList>
            <person name="Protasio A.V."/>
            <person name="Tsai I.J."/>
            <person name="Babbage A."/>
            <person name="Nichol S."/>
            <person name="Hunt M."/>
            <person name="Aslett M.A."/>
            <person name="De Silva N."/>
            <person name="Velarde G.S."/>
            <person name="Anderson T.J."/>
            <person name="Clark R.C."/>
            <person name="Davidson C."/>
            <person name="Dillon G.P."/>
            <person name="Holroyd N.E."/>
            <person name="LoVerde P.T."/>
            <person name="Lloyd C."/>
            <person name="McQuillan J."/>
            <person name="Oliveira G."/>
            <person name="Otto T.D."/>
            <person name="Parker-Manuel S.J."/>
            <person name="Quail M.A."/>
            <person name="Wilson R.A."/>
            <person name="Zerlotini A."/>
            <person name="Dunne D.W."/>
            <person name="Berriman M."/>
        </authorList>
    </citation>
    <scope>NUCLEOTIDE SEQUENCE [LARGE SCALE GENOMIC DNA]</scope>
    <source>
        <strain>Puerto Rican</strain>
    </source>
</reference>
<proteinExistence type="inferred from homology"/>
<comment type="function">
    <text evidence="1">Positively regulates the activity of the minus-end directed microtubule motor protein dynein. May enhance dynein-mediated microtubule sliding by targeting dynein to the microtubule plus end. Required for several dynein- and microtubule-dependent processes.</text>
</comment>
<comment type="subcellular location">
    <subcellularLocation>
        <location evidence="1">Cytoplasm</location>
        <location evidence="1">Cytoskeleton</location>
    </subcellularLocation>
    <subcellularLocation>
        <location evidence="1">Cytoplasm</location>
        <location evidence="1">Cytoskeleton</location>
        <location evidence="1">Microtubule organizing center</location>
        <location evidence="1">Centrosome</location>
    </subcellularLocation>
    <text evidence="1">Localizes to the plus end of microtubules and to the centrosome.</text>
</comment>
<comment type="domain">
    <text evidence="1">Dimerization mediated by the LisH domain may be required to activate dynein.</text>
</comment>
<comment type="similarity">
    <text evidence="1">Belongs to the WD repeat LIS1/nudF family.</text>
</comment>
<feature type="chain" id="PRO_0000405055" description="Lissencephaly-1 homolog">
    <location>
        <begin position="1"/>
        <end position="417"/>
    </location>
</feature>
<feature type="domain" description="LisH" evidence="1">
    <location>
        <begin position="7"/>
        <end position="39"/>
    </location>
</feature>
<feature type="repeat" description="WD 1">
    <location>
        <begin position="120"/>
        <end position="159"/>
    </location>
</feature>
<feature type="repeat" description="WD 2">
    <location>
        <begin position="162"/>
        <end position="203"/>
    </location>
</feature>
<feature type="repeat" description="WD 3">
    <location>
        <begin position="204"/>
        <end position="243"/>
    </location>
</feature>
<feature type="repeat" description="WD 4">
    <location>
        <begin position="246"/>
        <end position="285"/>
    </location>
</feature>
<feature type="repeat" description="WD 5">
    <location>
        <begin position="288"/>
        <end position="340"/>
    </location>
</feature>
<feature type="repeat" description="WD 6">
    <location>
        <begin position="343"/>
        <end position="382"/>
    </location>
</feature>
<feature type="repeat" description="WD 7">
    <location>
        <begin position="385"/>
        <end position="417"/>
    </location>
</feature>
<feature type="coiled-coil region" evidence="1">
    <location>
        <begin position="54"/>
        <end position="86"/>
    </location>
</feature>
<keyword id="KW-0131">Cell cycle</keyword>
<keyword id="KW-0132">Cell division</keyword>
<keyword id="KW-0175">Coiled coil</keyword>
<keyword id="KW-0963">Cytoplasm</keyword>
<keyword id="KW-0206">Cytoskeleton</keyword>
<keyword id="KW-0493">Microtubule</keyword>
<keyword id="KW-0498">Mitosis</keyword>
<keyword id="KW-1185">Reference proteome</keyword>
<keyword id="KW-0677">Repeat</keyword>
<keyword id="KW-0813">Transport</keyword>
<keyword id="KW-0853">WD repeat</keyword>
<evidence type="ECO:0000255" key="1">
    <source>
        <dbReference type="HAMAP-Rule" id="MF_03141"/>
    </source>
</evidence>
<dbReference type="EMBL" id="HE601626">
    <property type="protein sequence ID" value="CCD78337.1"/>
    <property type="molecule type" value="Genomic_DNA"/>
</dbReference>
<dbReference type="RefSeq" id="XP_018650950.1">
    <property type="nucleotide sequence ID" value="XM_018799130.1"/>
</dbReference>
<dbReference type="SMR" id="C4Q0P6"/>
<dbReference type="FunCoup" id="C4Q0P6">
    <property type="interactions" value="2130"/>
</dbReference>
<dbReference type="STRING" id="6183.C4Q0P6"/>
<dbReference type="GeneID" id="8345403"/>
<dbReference type="KEGG" id="smm:Smp_129340"/>
<dbReference type="CTD" id="8345403"/>
<dbReference type="eggNOG" id="KOG0295">
    <property type="taxonomic scope" value="Eukaryota"/>
</dbReference>
<dbReference type="HOGENOM" id="CLU_000288_57_15_1"/>
<dbReference type="InParanoid" id="C4Q0P6"/>
<dbReference type="OMA" id="WHVATKE"/>
<dbReference type="OrthoDB" id="674604at2759"/>
<dbReference type="PhylomeDB" id="C4Q0P6"/>
<dbReference type="Proteomes" id="UP000008854">
    <property type="component" value="Chromosome 3"/>
</dbReference>
<dbReference type="GO" id="GO:0005813">
    <property type="term" value="C:centrosome"/>
    <property type="evidence" value="ECO:0007669"/>
    <property type="project" value="UniProtKB-SubCell"/>
</dbReference>
<dbReference type="GO" id="GO:0005737">
    <property type="term" value="C:cytoplasm"/>
    <property type="evidence" value="ECO:0007669"/>
    <property type="project" value="UniProtKB-UniRule"/>
</dbReference>
<dbReference type="GO" id="GO:0005874">
    <property type="term" value="C:microtubule"/>
    <property type="evidence" value="ECO:0007669"/>
    <property type="project" value="UniProtKB-KW"/>
</dbReference>
<dbReference type="GO" id="GO:0005875">
    <property type="term" value="C:microtubule associated complex"/>
    <property type="evidence" value="ECO:0007669"/>
    <property type="project" value="UniProtKB-UniRule"/>
</dbReference>
<dbReference type="GO" id="GO:0070840">
    <property type="term" value="F:dynein complex binding"/>
    <property type="evidence" value="ECO:0007669"/>
    <property type="project" value="UniProtKB-UniRule"/>
</dbReference>
<dbReference type="GO" id="GO:0051301">
    <property type="term" value="P:cell division"/>
    <property type="evidence" value="ECO:0007669"/>
    <property type="project" value="UniProtKB-KW"/>
</dbReference>
<dbReference type="GO" id="GO:0000132">
    <property type="term" value="P:establishment of mitotic spindle orientation"/>
    <property type="evidence" value="ECO:0007669"/>
    <property type="project" value="UniProtKB-UniRule"/>
</dbReference>
<dbReference type="GO" id="GO:0051012">
    <property type="term" value="P:microtubule sliding"/>
    <property type="evidence" value="ECO:0007669"/>
    <property type="project" value="UniProtKB-UniRule"/>
</dbReference>
<dbReference type="CDD" id="cd00200">
    <property type="entry name" value="WD40"/>
    <property type="match status" value="1"/>
</dbReference>
<dbReference type="FunFam" id="1.20.960.30:FF:000002">
    <property type="entry name" value="Platelet-activating factor acetylhydrolase ib"/>
    <property type="match status" value="1"/>
</dbReference>
<dbReference type="Gene3D" id="1.20.960.30">
    <property type="match status" value="1"/>
</dbReference>
<dbReference type="Gene3D" id="2.130.10.10">
    <property type="entry name" value="YVTN repeat-like/Quinoprotein amine dehydrogenase"/>
    <property type="match status" value="1"/>
</dbReference>
<dbReference type="HAMAP" id="MF_03141">
    <property type="entry name" value="lis1"/>
    <property type="match status" value="1"/>
</dbReference>
<dbReference type="InterPro" id="IPR017252">
    <property type="entry name" value="Dynein_regulator_LIS1"/>
</dbReference>
<dbReference type="InterPro" id="IPR020472">
    <property type="entry name" value="G-protein_beta_WD-40_rep"/>
</dbReference>
<dbReference type="InterPro" id="IPR037190">
    <property type="entry name" value="LIS1_N"/>
</dbReference>
<dbReference type="InterPro" id="IPR006594">
    <property type="entry name" value="LisH"/>
</dbReference>
<dbReference type="InterPro" id="IPR056795">
    <property type="entry name" value="PAC1-like_LisH-like_dom"/>
</dbReference>
<dbReference type="InterPro" id="IPR015943">
    <property type="entry name" value="WD40/YVTN_repeat-like_dom_sf"/>
</dbReference>
<dbReference type="InterPro" id="IPR019775">
    <property type="entry name" value="WD40_repeat_CS"/>
</dbReference>
<dbReference type="InterPro" id="IPR036322">
    <property type="entry name" value="WD40_repeat_dom_sf"/>
</dbReference>
<dbReference type="InterPro" id="IPR001680">
    <property type="entry name" value="WD40_rpt"/>
</dbReference>
<dbReference type="PANTHER" id="PTHR19879">
    <property type="entry name" value="TRANSCRIPTION INITIATION FACTOR TFIID"/>
    <property type="match status" value="1"/>
</dbReference>
<dbReference type="PANTHER" id="PTHR19879:SF9">
    <property type="entry name" value="TRANSCRIPTION INITIATION FACTOR TFIID SUBUNIT 5"/>
    <property type="match status" value="1"/>
</dbReference>
<dbReference type="Pfam" id="PF24951">
    <property type="entry name" value="LisH_PAC1"/>
    <property type="match status" value="1"/>
</dbReference>
<dbReference type="Pfam" id="PF00400">
    <property type="entry name" value="WD40"/>
    <property type="match status" value="7"/>
</dbReference>
<dbReference type="PIRSF" id="PIRSF037647">
    <property type="entry name" value="Dynein_regulator_Lis1"/>
    <property type="match status" value="1"/>
</dbReference>
<dbReference type="PRINTS" id="PR00320">
    <property type="entry name" value="GPROTEINBRPT"/>
</dbReference>
<dbReference type="SMART" id="SM00667">
    <property type="entry name" value="LisH"/>
    <property type="match status" value="1"/>
</dbReference>
<dbReference type="SMART" id="SM00320">
    <property type="entry name" value="WD40"/>
    <property type="match status" value="7"/>
</dbReference>
<dbReference type="SUPFAM" id="SSF109925">
    <property type="entry name" value="Lissencephaly-1 protein (Lis-1, PAF-AH alpha) N-terminal domain"/>
    <property type="match status" value="1"/>
</dbReference>
<dbReference type="SUPFAM" id="SSF50978">
    <property type="entry name" value="WD40 repeat-like"/>
    <property type="match status" value="1"/>
</dbReference>
<dbReference type="PROSITE" id="PS50896">
    <property type="entry name" value="LISH"/>
    <property type="match status" value="1"/>
</dbReference>
<dbReference type="PROSITE" id="PS00678">
    <property type="entry name" value="WD_REPEATS_1"/>
    <property type="match status" value="5"/>
</dbReference>
<dbReference type="PROSITE" id="PS50082">
    <property type="entry name" value="WD_REPEATS_2"/>
    <property type="match status" value="7"/>
</dbReference>
<dbReference type="PROSITE" id="PS50294">
    <property type="entry name" value="WD_REPEATS_REGION"/>
    <property type="match status" value="1"/>
</dbReference>
<gene>
    <name type="ORF">Smp_129340</name>
</gene>
<organism>
    <name type="scientific">Schistosoma mansoni</name>
    <name type="common">Blood fluke</name>
    <dbReference type="NCBI Taxonomy" id="6183"/>
    <lineage>
        <taxon>Eukaryota</taxon>
        <taxon>Metazoa</taxon>
        <taxon>Spiralia</taxon>
        <taxon>Lophotrochozoa</taxon>
        <taxon>Platyhelminthes</taxon>
        <taxon>Trematoda</taxon>
        <taxon>Digenea</taxon>
        <taxon>Strigeidida</taxon>
        <taxon>Schistosomatoidea</taxon>
        <taxon>Schistosomatidae</taxon>
        <taxon>Schistosoma</taxon>
    </lineage>
</organism>
<protein>
    <recommendedName>
        <fullName evidence="1">Lissencephaly-1 homolog</fullName>
    </recommendedName>
</protein>
<sequence length="417" mass="47106">MVLAQRQKEELNRAIADYLFANGYVKALNAFREESQLAGENDRKYDGLLEKKWTSVIRLQKKVMDLEAKLNEAEKEFQSMQNAIGFGVAGAAPGSGLSDRSDRRDVDAIPRPPAKFTLTGHRSPITRVLFHPHYNVFVSASEDASIKVWDYETGEFEHTLKGHTDSVQDVAFDPSGKFLASCSADMQVKLWDFTIYQCIKTLTGHDHNVSSVAFLPSGDFLVSASRDKTIKMWEVSTGYCTKTFIGHTEWIRSVRPSPEGNLLASCSNDHTIRIWSVESRECQVVLRGHEHVVECIAWASHPQNLNSLPSSMNSSLLLVSGSRDRTIRFWDVNIGICLFVLIGHDNWVRQLVFHPHGRLLLSASDDKTIRVWDLKNRRCHKTLNAHSHFVTSLDVNRLAPYAITGSVDQTIHIWDCR</sequence>